<organism>
    <name type="scientific">Streptococcus pyogenes serotype M1</name>
    <dbReference type="NCBI Taxonomy" id="301447"/>
    <lineage>
        <taxon>Bacteria</taxon>
        <taxon>Bacillati</taxon>
        <taxon>Bacillota</taxon>
        <taxon>Bacilli</taxon>
        <taxon>Lactobacillales</taxon>
        <taxon>Streptococcaceae</taxon>
        <taxon>Streptococcus</taxon>
    </lineage>
</organism>
<name>MURE_STRP1</name>
<proteinExistence type="evidence at protein level"/>
<sequence>MITIEQLLDILKKDHNFREVLDADGYHYHYQGFSFERLSYDSRQVDGKTLFFAKGATFKADYLKEAITNGLQLYISEVDYELGIPVVLVTDIKKAMSLIAMAFYGNPQEKLKLLAFTGTKGKTTAAYFAYHMLKESYKPAMFSTMNTTLDGKTFFKSQLTTPESLDLFAMMAECVTNGMTHLIMEVSSQAYLVDRVYGLTFDVGVFLNISPDHIGPIEHPTFEDYFYHKRLLMENSRAVVINSGMDHFSFLADQVADQEHVFYGPLSDNQITTSQAFSFEAKGQLAGHYDIQLIGHFNQENAMAAGLACLRLGASLADIQKGIAKTRVPGRMEVLTMTNHAKVFVDYAHNGDSLEKLLSVVEEHQTGKLMLILGAPGNKGESRRADFGRVIHQHPNLTVILTADDPNFEDPEDISKEIASHIARPVEIISDREQAIQKAMSLCQGAKDAVIIAGKGADAYQIVKGQQVAYAGDLAIAKHYL</sequence>
<reference key="1">
    <citation type="journal article" date="2001" name="Proc. Natl. Acad. Sci. U.S.A.">
        <title>Complete genome sequence of an M1 strain of Streptococcus pyogenes.</title>
        <authorList>
            <person name="Ferretti J.J."/>
            <person name="McShan W.M."/>
            <person name="Ajdic D.J."/>
            <person name="Savic D.J."/>
            <person name="Savic G."/>
            <person name="Lyon K."/>
            <person name="Primeaux C."/>
            <person name="Sezate S."/>
            <person name="Suvorov A.N."/>
            <person name="Kenton S."/>
            <person name="Lai H.S."/>
            <person name="Lin S.P."/>
            <person name="Qian Y."/>
            <person name="Jia H.G."/>
            <person name="Najar F.Z."/>
            <person name="Ren Q."/>
            <person name="Zhu H."/>
            <person name="Song L."/>
            <person name="White J."/>
            <person name="Yuan X."/>
            <person name="Clifton S.W."/>
            <person name="Roe B.A."/>
            <person name="McLaughlin R.E."/>
        </authorList>
    </citation>
    <scope>NUCLEOTIDE SEQUENCE [LARGE SCALE GENOMIC DNA]</scope>
    <source>
        <strain>ATCC 700294 / SF370 / Serotype M1</strain>
    </source>
</reference>
<reference key="2">
    <citation type="journal article" date="2005" name="J. Infect. Dis.">
        <title>Evolutionary origin and emergence of a highly successful clone of serotype M1 group A Streptococcus involved multiple horizontal gene transfer events.</title>
        <authorList>
            <person name="Sumby P."/>
            <person name="Porcella S.F."/>
            <person name="Madrigal A.G."/>
            <person name="Barbian K.D."/>
            <person name="Virtaneva K."/>
            <person name="Ricklefs S.M."/>
            <person name="Sturdevant D.E."/>
            <person name="Graham M.R."/>
            <person name="Vuopio-Varkila J."/>
            <person name="Hoe N.P."/>
            <person name="Musser J.M."/>
        </authorList>
    </citation>
    <scope>NUCLEOTIDE SEQUENCE [LARGE SCALE GENOMIC DNA]</scope>
    <source>
        <strain>ATCC BAA-947 / MGAS5005 / Serotype M1</strain>
    </source>
</reference>
<reference key="3">
    <citation type="journal article" date="2004" name="Enzyme Microb. Technol.">
        <title>Cloning, expression and characterization of the Streptococcus pyogenes murE gene encoding a UDP-MurNAc-L-alanyl-D-glutamate: L-lysine ligase.</title>
        <authorList>
            <person name="Triolo T.A."/>
            <person name="Chabin R.M."/>
            <person name="Pompliano D.L."/>
        </authorList>
    </citation>
    <scope>FUNCTION</scope>
    <scope>CATALYTIC ACTIVITY</scope>
    <scope>BIOPHYSICOCHEMICAL PROPERTIES</scope>
    <source>
        <strain>ATCC 700294 / SF370 / Serotype M1</strain>
    </source>
</reference>
<protein>
    <recommendedName>
        <fullName>UDP-N-acetylmuramoyl-L-alanyl-D-glutamate--L-lysine ligase</fullName>
        <ecNumber evidence="3">6.3.2.7</ecNumber>
    </recommendedName>
    <alternativeName>
        <fullName>L-lysine-adding enzyme</fullName>
    </alternativeName>
    <alternativeName>
        <fullName>UDP-MurNAc-L-Ala-D-Glu:L-Lys ligase</fullName>
    </alternativeName>
    <alternativeName>
        <fullName>UDP-MurNAc-tripeptide synthetase</fullName>
    </alternativeName>
    <alternativeName>
        <fullName>UDP-N-acetylmuramyl-tripeptide synthetase</fullName>
    </alternativeName>
</protein>
<dbReference type="EC" id="6.3.2.7" evidence="3"/>
<dbReference type="EMBL" id="AE004092">
    <property type="protein sequence ID" value="AAK33428.1"/>
    <property type="molecule type" value="Genomic_DNA"/>
</dbReference>
<dbReference type="EMBL" id="CP000017">
    <property type="protein sequence ID" value="AAZ50944.1"/>
    <property type="molecule type" value="Genomic_DNA"/>
</dbReference>
<dbReference type="RefSeq" id="NP_268707.1">
    <property type="nucleotide sequence ID" value="NC_002737.2"/>
</dbReference>
<dbReference type="SMR" id="Q9A196"/>
<dbReference type="PaxDb" id="1314-HKU360_00363"/>
<dbReference type="KEGG" id="spy:SPy_0388"/>
<dbReference type="KEGG" id="spz:M5005_Spy0325"/>
<dbReference type="PATRIC" id="fig|160490.10.peg.335"/>
<dbReference type="HOGENOM" id="CLU_022291_4_2_9"/>
<dbReference type="OMA" id="EYFIMEV"/>
<dbReference type="SABIO-RK" id="Q9A196"/>
<dbReference type="UniPathway" id="UPA00219"/>
<dbReference type="Proteomes" id="UP000000750">
    <property type="component" value="Chromosome"/>
</dbReference>
<dbReference type="GO" id="GO:0005737">
    <property type="term" value="C:cytoplasm"/>
    <property type="evidence" value="ECO:0007669"/>
    <property type="project" value="UniProtKB-SubCell"/>
</dbReference>
<dbReference type="GO" id="GO:0005524">
    <property type="term" value="F:ATP binding"/>
    <property type="evidence" value="ECO:0007669"/>
    <property type="project" value="UniProtKB-UniRule"/>
</dbReference>
<dbReference type="GO" id="GO:0000287">
    <property type="term" value="F:magnesium ion binding"/>
    <property type="evidence" value="ECO:0007669"/>
    <property type="project" value="UniProtKB-UniRule"/>
</dbReference>
<dbReference type="GO" id="GO:0047482">
    <property type="term" value="F:UDP-N-acetylmuramoyl-L-alanyl-D-glutamate-L-lysine ligase activity"/>
    <property type="evidence" value="ECO:0007669"/>
    <property type="project" value="UniProtKB-UniRule"/>
</dbReference>
<dbReference type="GO" id="GO:0051301">
    <property type="term" value="P:cell division"/>
    <property type="evidence" value="ECO:0007669"/>
    <property type="project" value="UniProtKB-KW"/>
</dbReference>
<dbReference type="GO" id="GO:0071555">
    <property type="term" value="P:cell wall organization"/>
    <property type="evidence" value="ECO:0007669"/>
    <property type="project" value="UniProtKB-KW"/>
</dbReference>
<dbReference type="GO" id="GO:0009252">
    <property type="term" value="P:peptidoglycan biosynthetic process"/>
    <property type="evidence" value="ECO:0007669"/>
    <property type="project" value="UniProtKB-UniRule"/>
</dbReference>
<dbReference type="GO" id="GO:0008360">
    <property type="term" value="P:regulation of cell shape"/>
    <property type="evidence" value="ECO:0007669"/>
    <property type="project" value="UniProtKB-KW"/>
</dbReference>
<dbReference type="Gene3D" id="3.90.190.20">
    <property type="entry name" value="Mur ligase, C-terminal domain"/>
    <property type="match status" value="1"/>
</dbReference>
<dbReference type="Gene3D" id="3.40.1190.10">
    <property type="entry name" value="Mur-like, catalytic domain"/>
    <property type="match status" value="1"/>
</dbReference>
<dbReference type="Gene3D" id="3.40.1390.10">
    <property type="entry name" value="MurE/MurF, N-terminal domain"/>
    <property type="match status" value="1"/>
</dbReference>
<dbReference type="HAMAP" id="MF_00208">
    <property type="entry name" value="MurE"/>
    <property type="match status" value="1"/>
</dbReference>
<dbReference type="InterPro" id="IPR036565">
    <property type="entry name" value="Mur-like_cat_sf"/>
</dbReference>
<dbReference type="InterPro" id="IPR004101">
    <property type="entry name" value="Mur_ligase_C"/>
</dbReference>
<dbReference type="InterPro" id="IPR036615">
    <property type="entry name" value="Mur_ligase_C_dom_sf"/>
</dbReference>
<dbReference type="InterPro" id="IPR013221">
    <property type="entry name" value="Mur_ligase_cen"/>
</dbReference>
<dbReference type="InterPro" id="IPR035911">
    <property type="entry name" value="MurE/MurF_N"/>
</dbReference>
<dbReference type="InterPro" id="IPR005761">
    <property type="entry name" value="UDP-N-AcMur-Glu-dNH2Pim_ligase"/>
</dbReference>
<dbReference type="NCBIfam" id="TIGR01085">
    <property type="entry name" value="murE"/>
    <property type="match status" value="1"/>
</dbReference>
<dbReference type="NCBIfam" id="NF010628">
    <property type="entry name" value="PRK14022.1"/>
    <property type="match status" value="1"/>
</dbReference>
<dbReference type="PANTHER" id="PTHR23135">
    <property type="entry name" value="MUR LIGASE FAMILY MEMBER"/>
    <property type="match status" value="1"/>
</dbReference>
<dbReference type="PANTHER" id="PTHR23135:SF4">
    <property type="entry name" value="UDP-N-ACETYLMURAMOYL-L-ALANYL-D-GLUTAMATE--2,6-DIAMINOPIMELATE LIGASE MURE HOMOLOG, CHLOROPLASTIC"/>
    <property type="match status" value="1"/>
</dbReference>
<dbReference type="Pfam" id="PF02875">
    <property type="entry name" value="Mur_ligase_C"/>
    <property type="match status" value="1"/>
</dbReference>
<dbReference type="Pfam" id="PF08245">
    <property type="entry name" value="Mur_ligase_M"/>
    <property type="match status" value="1"/>
</dbReference>
<dbReference type="SUPFAM" id="SSF53623">
    <property type="entry name" value="MurD-like peptide ligases, catalytic domain"/>
    <property type="match status" value="1"/>
</dbReference>
<dbReference type="SUPFAM" id="SSF53244">
    <property type="entry name" value="MurD-like peptide ligases, peptide-binding domain"/>
    <property type="match status" value="1"/>
</dbReference>
<dbReference type="SUPFAM" id="SSF63418">
    <property type="entry name" value="MurE/MurF N-terminal domain"/>
    <property type="match status" value="1"/>
</dbReference>
<evidence type="ECO:0000250" key="1"/>
<evidence type="ECO:0000255" key="2"/>
<evidence type="ECO:0000269" key="3">
    <source ref="3"/>
</evidence>
<evidence type="ECO:0000305" key="4"/>
<gene>
    <name type="primary">murE</name>
    <name type="ordered locus">SPy_0388</name>
    <name type="ordered locus">M5005_Spy0325</name>
</gene>
<comment type="function">
    <text evidence="3">Catalyzes the addition of L-lysine to the nucleotide precursor UDP-N-acetylmuramoyl-L-alanyl-D-glutamate (UMAG) in the biosynthesis of bacterial cell-wall peptidoglycan.</text>
</comment>
<comment type="catalytic activity">
    <reaction evidence="3">
        <text>UDP-N-acetyl-alpha-D-muramoyl-L-alanyl-D-glutamate + L-lysine + ATP = UDP-N-acetyl-alpha-D-muramoyl-L-alanyl-gamma-D-glutamyl-L-lysine + ADP + phosphate + H(+)</text>
        <dbReference type="Rhea" id="RHEA:17969"/>
        <dbReference type="ChEBI" id="CHEBI:15378"/>
        <dbReference type="ChEBI" id="CHEBI:30616"/>
        <dbReference type="ChEBI" id="CHEBI:32551"/>
        <dbReference type="ChEBI" id="CHEBI:43474"/>
        <dbReference type="ChEBI" id="CHEBI:83900"/>
        <dbReference type="ChEBI" id="CHEBI:83903"/>
        <dbReference type="ChEBI" id="CHEBI:456216"/>
        <dbReference type="EC" id="6.3.2.7"/>
    </reaction>
</comment>
<comment type="biophysicochemical properties">
    <kinetics>
        <KM evidence="3">20.5 uM for UDP-N-acetylmuramoyl-L-Ala-D-Glu</KM>
        <KM evidence="3">122 uM for L-lysine</KM>
        <KM evidence="3">125 uM for ATP</KM>
    </kinetics>
    <temperatureDependence>
        <text evidence="3">Optimum temperature is 28 degrees Celsius.</text>
    </temperatureDependence>
</comment>
<comment type="pathway">
    <text>Cell wall biogenesis; peptidoglycan biosynthesis.</text>
</comment>
<comment type="subcellular location">
    <subcellularLocation>
        <location evidence="1">Cytoplasm</location>
    </subcellularLocation>
</comment>
<comment type="PTM">
    <text evidence="1">Carboxylation is probably crucial for Mg(2+) binding and, consequently, for the gamma-phosphate positioning of ATP.</text>
</comment>
<comment type="similarity">
    <text evidence="4">Belongs to the MurCDEF family. MurE subfamily.</text>
</comment>
<feature type="chain" id="PRO_0000101955" description="UDP-N-acetylmuramoyl-L-alanyl-D-glutamate--L-lysine ligase">
    <location>
        <begin position="1"/>
        <end position="481"/>
    </location>
</feature>
<feature type="short sequence motif" description="L-lysine recognition motif">
    <location>
        <begin position="404"/>
        <end position="407"/>
    </location>
</feature>
<feature type="binding site" evidence="1">
    <location>
        <position position="42"/>
    </location>
    <ligand>
        <name>UDP-N-acetyl-alpha-D-muramoyl-L-alanyl-D-glutamate</name>
        <dbReference type="ChEBI" id="CHEBI:83900"/>
    </ligand>
</feature>
<feature type="binding site" evidence="2">
    <location>
        <begin position="118"/>
        <end position="124"/>
    </location>
    <ligand>
        <name>ATP</name>
        <dbReference type="ChEBI" id="CHEBI:30616"/>
    </ligand>
</feature>
<feature type="binding site" evidence="1">
    <location>
        <position position="158"/>
    </location>
    <ligand>
        <name>UDP-N-acetyl-alpha-D-muramoyl-L-alanyl-D-glutamate</name>
        <dbReference type="ChEBI" id="CHEBI:83900"/>
    </ligand>
</feature>
<feature type="binding site" evidence="1">
    <location>
        <begin position="160"/>
        <end position="161"/>
    </location>
    <ligand>
        <name>UDP-N-acetyl-alpha-D-muramoyl-L-alanyl-D-glutamate</name>
        <dbReference type="ChEBI" id="CHEBI:83900"/>
    </ligand>
</feature>
<feature type="binding site" evidence="1">
    <location>
        <position position="187"/>
    </location>
    <ligand>
        <name>UDP-N-acetyl-alpha-D-muramoyl-L-alanyl-D-glutamate</name>
        <dbReference type="ChEBI" id="CHEBI:83900"/>
    </ligand>
</feature>
<feature type="binding site" evidence="1">
    <location>
        <position position="195"/>
    </location>
    <ligand>
        <name>UDP-N-acetyl-alpha-D-muramoyl-L-alanyl-D-glutamate</name>
        <dbReference type="ChEBI" id="CHEBI:83900"/>
    </ligand>
</feature>
<feature type="modified residue" description="N6-carboxylysine" evidence="1">
    <location>
        <position position="229"/>
    </location>
</feature>
<keyword id="KW-0067">ATP-binding</keyword>
<keyword id="KW-0131">Cell cycle</keyword>
<keyword id="KW-0132">Cell division</keyword>
<keyword id="KW-0133">Cell shape</keyword>
<keyword id="KW-0961">Cell wall biogenesis/degradation</keyword>
<keyword id="KW-0963">Cytoplasm</keyword>
<keyword id="KW-0436">Ligase</keyword>
<keyword id="KW-0547">Nucleotide-binding</keyword>
<keyword id="KW-0573">Peptidoglycan synthesis</keyword>
<keyword id="KW-1185">Reference proteome</keyword>
<accession>Q9A196</accession>
<accession>Q490M4</accession>